<evidence type="ECO:0000250" key="1"/>
<evidence type="ECO:0000250" key="2">
    <source>
        <dbReference type="UniProtKB" id="P30838"/>
    </source>
</evidence>
<evidence type="ECO:0000269" key="3">
    <source>
    </source>
</evidence>
<evidence type="ECO:0000269" key="4">
    <source>
    </source>
</evidence>
<evidence type="ECO:0000269" key="5">
    <source>
    </source>
</evidence>
<evidence type="ECO:0000305" key="6"/>
<dbReference type="EC" id="1.2.1.5" evidence="5"/>
<dbReference type="EMBL" id="U12785">
    <property type="protein sequence ID" value="AAA20670.1"/>
    <property type="molecule type" value="mRNA"/>
</dbReference>
<dbReference type="EMBL" id="AF072815">
    <property type="protein sequence ID" value="AAD15964.1"/>
    <property type="molecule type" value="mRNA"/>
</dbReference>
<dbReference type="EMBL" id="AL646093">
    <property type="status" value="NOT_ANNOTATED_CDS"/>
    <property type="molecule type" value="Genomic_DNA"/>
</dbReference>
<dbReference type="CCDS" id="CCDS24808.1"/>
<dbReference type="RefSeq" id="NP_001106196.1">
    <property type="nucleotide sequence ID" value="NM_001112725.1"/>
</dbReference>
<dbReference type="RefSeq" id="NP_031462.2">
    <property type="nucleotide sequence ID" value="NM_007436.2"/>
</dbReference>
<dbReference type="RefSeq" id="XP_006532089.1">
    <property type="nucleotide sequence ID" value="XM_006532026.1"/>
</dbReference>
<dbReference type="RefSeq" id="XP_006532090.1">
    <property type="nucleotide sequence ID" value="XM_006532027.4"/>
</dbReference>
<dbReference type="SMR" id="P47739"/>
<dbReference type="BioGRID" id="198065">
    <property type="interactions" value="2"/>
</dbReference>
<dbReference type="FunCoup" id="P47739">
    <property type="interactions" value="723"/>
</dbReference>
<dbReference type="STRING" id="10090.ENSMUSP00000019246"/>
<dbReference type="SwissLipids" id="SLP:000001745"/>
<dbReference type="PhosphoSitePlus" id="P47739"/>
<dbReference type="SwissPalm" id="P47739"/>
<dbReference type="jPOST" id="P47739"/>
<dbReference type="PaxDb" id="10090-ENSMUSP00000019246"/>
<dbReference type="PeptideAtlas" id="P47739"/>
<dbReference type="ProteomicsDB" id="296165"/>
<dbReference type="Antibodypedia" id="26030">
    <property type="antibodies" value="476 antibodies from 39 providers"/>
</dbReference>
<dbReference type="DNASU" id="11670"/>
<dbReference type="Ensembl" id="ENSMUST00000019246.4">
    <property type="protein sequence ID" value="ENSMUSP00000019246.4"/>
    <property type="gene ID" value="ENSMUSG00000019102.11"/>
</dbReference>
<dbReference type="Ensembl" id="ENSMUST00000108716.8">
    <property type="protein sequence ID" value="ENSMUSP00000104356.2"/>
    <property type="gene ID" value="ENSMUSG00000019102.11"/>
</dbReference>
<dbReference type="GeneID" id="11670"/>
<dbReference type="KEGG" id="mmu:11670"/>
<dbReference type="UCSC" id="uc007jhd.2">
    <property type="organism name" value="mouse"/>
</dbReference>
<dbReference type="AGR" id="MGI:1353451"/>
<dbReference type="CTD" id="218"/>
<dbReference type="MGI" id="MGI:1353451">
    <property type="gene designation" value="Aldh3a1"/>
</dbReference>
<dbReference type="VEuPathDB" id="HostDB:ENSMUSG00000019102"/>
<dbReference type="eggNOG" id="KOG2456">
    <property type="taxonomic scope" value="Eukaryota"/>
</dbReference>
<dbReference type="GeneTree" id="ENSGT00940000162101"/>
<dbReference type="HOGENOM" id="CLU_005391_3_0_1"/>
<dbReference type="InParanoid" id="P47739"/>
<dbReference type="OMA" id="RYLYLYC"/>
<dbReference type="OrthoDB" id="440325at2759"/>
<dbReference type="PhylomeDB" id="P47739"/>
<dbReference type="TreeFam" id="TF314264"/>
<dbReference type="BRENDA" id="1.2.1.5">
    <property type="organism ID" value="3474"/>
</dbReference>
<dbReference type="Reactome" id="R-MMU-211945">
    <property type="pathway name" value="Phase I - Functionalization of compounds"/>
</dbReference>
<dbReference type="BioGRID-ORCS" id="11670">
    <property type="hits" value="2 hits in 77 CRISPR screens"/>
</dbReference>
<dbReference type="ChiTaRS" id="Aldh3a2">
    <property type="organism name" value="mouse"/>
</dbReference>
<dbReference type="PRO" id="PR:P47739"/>
<dbReference type="Proteomes" id="UP000000589">
    <property type="component" value="Chromosome 11"/>
</dbReference>
<dbReference type="RNAct" id="P47739">
    <property type="molecule type" value="protein"/>
</dbReference>
<dbReference type="Bgee" id="ENSMUSG00000019102">
    <property type="expression patterns" value="Expressed in substantia propria of cornea and 83 other cell types or tissues"/>
</dbReference>
<dbReference type="ExpressionAtlas" id="P47739">
    <property type="expression patterns" value="baseline and differential"/>
</dbReference>
<dbReference type="GO" id="GO:0005737">
    <property type="term" value="C:cytoplasm"/>
    <property type="evidence" value="ECO:0000314"/>
    <property type="project" value="MGI"/>
</dbReference>
<dbReference type="GO" id="GO:0005829">
    <property type="term" value="C:cytosol"/>
    <property type="evidence" value="ECO:0000250"/>
    <property type="project" value="UniProtKB"/>
</dbReference>
<dbReference type="GO" id="GO:0005783">
    <property type="term" value="C:endoplasmic reticulum"/>
    <property type="evidence" value="ECO:0007669"/>
    <property type="project" value="Ensembl"/>
</dbReference>
<dbReference type="GO" id="GO:0016020">
    <property type="term" value="C:membrane"/>
    <property type="evidence" value="ECO:0000314"/>
    <property type="project" value="MGI"/>
</dbReference>
<dbReference type="GO" id="GO:0005886">
    <property type="term" value="C:plasma membrane"/>
    <property type="evidence" value="ECO:0007669"/>
    <property type="project" value="Ensembl"/>
</dbReference>
<dbReference type="GO" id="GO:0004028">
    <property type="term" value="F:3-chloroallyl aldehyde dehydrogenase activity"/>
    <property type="evidence" value="ECO:0000314"/>
    <property type="project" value="MGI"/>
</dbReference>
<dbReference type="GO" id="GO:0008106">
    <property type="term" value="F:alcohol dehydrogenase (NADP+) activity"/>
    <property type="evidence" value="ECO:0000250"/>
    <property type="project" value="UniProtKB"/>
</dbReference>
<dbReference type="GO" id="GO:0004029">
    <property type="term" value="F:aldehyde dehydrogenase (NAD+) activity"/>
    <property type="evidence" value="ECO:0000314"/>
    <property type="project" value="MGI"/>
</dbReference>
<dbReference type="GO" id="GO:0018479">
    <property type="term" value="F:benzaldehyde dehydrogenase (NAD+) activity"/>
    <property type="evidence" value="ECO:0007669"/>
    <property type="project" value="Ensembl"/>
</dbReference>
<dbReference type="GO" id="GO:0016620">
    <property type="term" value="F:oxidoreductase activity, acting on the aldehyde or oxo group of donors, NAD or NADP as acceptor"/>
    <property type="evidence" value="ECO:0000314"/>
    <property type="project" value="UniProtKB"/>
</dbReference>
<dbReference type="GO" id="GO:0006081">
    <property type="term" value="P:aldehyde metabolic process"/>
    <property type="evidence" value="ECO:0000250"/>
    <property type="project" value="UniProtKB"/>
</dbReference>
<dbReference type="GO" id="GO:0006629">
    <property type="term" value="P:lipid metabolic process"/>
    <property type="evidence" value="ECO:0007669"/>
    <property type="project" value="UniProtKB-KW"/>
</dbReference>
<dbReference type="CDD" id="cd07132">
    <property type="entry name" value="ALDH_F3AB"/>
    <property type="match status" value="1"/>
</dbReference>
<dbReference type="FunFam" id="3.40.309.10:FF:000003">
    <property type="entry name" value="Aldehyde dehydrogenase"/>
    <property type="match status" value="1"/>
</dbReference>
<dbReference type="FunFam" id="3.40.605.10:FF:000004">
    <property type="entry name" value="Aldehyde dehydrogenase"/>
    <property type="match status" value="1"/>
</dbReference>
<dbReference type="FunFam" id="3.40.605.10:FF:000027">
    <property type="entry name" value="Aldehyde dehydrogenase, dimeric NADP-preferring"/>
    <property type="match status" value="1"/>
</dbReference>
<dbReference type="Gene3D" id="3.40.605.10">
    <property type="entry name" value="Aldehyde Dehydrogenase, Chain A, domain 1"/>
    <property type="match status" value="1"/>
</dbReference>
<dbReference type="Gene3D" id="3.40.309.10">
    <property type="entry name" value="Aldehyde Dehydrogenase, Chain A, domain 2"/>
    <property type="match status" value="1"/>
</dbReference>
<dbReference type="InterPro" id="IPR016161">
    <property type="entry name" value="Ald_DH/histidinol_DH"/>
</dbReference>
<dbReference type="InterPro" id="IPR016163">
    <property type="entry name" value="Ald_DH_C"/>
</dbReference>
<dbReference type="InterPro" id="IPR016160">
    <property type="entry name" value="Ald_DH_CS_CYS"/>
</dbReference>
<dbReference type="InterPro" id="IPR029510">
    <property type="entry name" value="Ald_DH_CS_GLU"/>
</dbReference>
<dbReference type="InterPro" id="IPR016162">
    <property type="entry name" value="Ald_DH_N"/>
</dbReference>
<dbReference type="InterPro" id="IPR015590">
    <property type="entry name" value="Aldehyde_DH_dom"/>
</dbReference>
<dbReference type="InterPro" id="IPR012394">
    <property type="entry name" value="Aldehyde_DH_NAD(P)"/>
</dbReference>
<dbReference type="PANTHER" id="PTHR43570">
    <property type="entry name" value="ALDEHYDE DEHYDROGENASE"/>
    <property type="match status" value="1"/>
</dbReference>
<dbReference type="PANTHER" id="PTHR43570:SF15">
    <property type="entry name" value="ALDEHYDE DEHYDROGENASE, DIMERIC NADP-PREFERRING"/>
    <property type="match status" value="1"/>
</dbReference>
<dbReference type="Pfam" id="PF00171">
    <property type="entry name" value="Aldedh"/>
    <property type="match status" value="1"/>
</dbReference>
<dbReference type="PIRSF" id="PIRSF036492">
    <property type="entry name" value="ALDH"/>
    <property type="match status" value="1"/>
</dbReference>
<dbReference type="SUPFAM" id="SSF53720">
    <property type="entry name" value="ALDH-like"/>
    <property type="match status" value="1"/>
</dbReference>
<dbReference type="PROSITE" id="PS00070">
    <property type="entry name" value="ALDEHYDE_DEHYDR_CYS"/>
    <property type="match status" value="1"/>
</dbReference>
<dbReference type="PROSITE" id="PS00687">
    <property type="entry name" value="ALDEHYDE_DEHYDR_GLU"/>
    <property type="match status" value="1"/>
</dbReference>
<reference key="1">
    <citation type="journal article" date="1993" name="Pharmacogenetics">
        <title>Mouse dioxin-inducible cytosolic aldehyde dehydrogenase-3: AHD4 cDNA sequence, genetic mapping, and differences in mRNA levels.</title>
        <authorList>
            <person name="Vasiliou V."/>
            <person name="Reuter S.F."/>
            <person name="Kozak C.A."/>
            <person name="Nebert D.W."/>
        </authorList>
    </citation>
    <scope>NUCLEOTIDE SEQUENCE [MRNA]</scope>
    <source>
        <strain>C3H/HeJ</strain>
    </source>
</reference>
<reference key="2">
    <citation type="journal article" date="1994" name="Toxicologist">
        <title>Organization and characterization of the murine cytosolic TCDD-inducible aldehyde dehydrogenase gene (ahd4).</title>
        <authorList>
            <person name="Vasiliou V."/>
            <person name="Reuter S.F."/>
            <person name="Nebert D.W."/>
        </authorList>
    </citation>
    <scope>NUCLEOTIDE SEQUENCE [MRNA]</scope>
</reference>
<reference key="3">
    <citation type="journal article" date="1999" name="Pharmacogenetics">
        <title>Four amino acid changes are associated with the Aldh3a1 locus polymorphism in mice which may be responsible for corneal sensitivity to ultraviolet light.</title>
        <authorList>
            <person name="Shiao T."/>
            <person name="Tran P."/>
            <person name="Siegel D."/>
            <person name="Lee J."/>
            <person name="Vasiliou V."/>
        </authorList>
    </citation>
    <scope>NUCLEOTIDE SEQUENCE [MRNA]</scope>
    <scope>FUNCTION</scope>
    <scope>TISSUE SPECIFICITY</scope>
    <scope>VARIANTS ALD3A1C ASN-154; ARG-305 AND VAL-352</scope>
    <source>
        <strain>DBA/2J</strain>
        <strain>SWR/J</strain>
    </source>
</reference>
<reference key="4">
    <citation type="journal article" date="2009" name="PLoS Biol.">
        <title>Lineage-specific biology revealed by a finished genome assembly of the mouse.</title>
        <authorList>
            <person name="Church D.M."/>
            <person name="Goodstadt L."/>
            <person name="Hillier L.W."/>
            <person name="Zody M.C."/>
            <person name="Goldstein S."/>
            <person name="She X."/>
            <person name="Bult C.J."/>
            <person name="Agarwala R."/>
            <person name="Cherry J.L."/>
            <person name="DiCuccio M."/>
            <person name="Hlavina W."/>
            <person name="Kapustin Y."/>
            <person name="Meric P."/>
            <person name="Maglott D."/>
            <person name="Birtle Z."/>
            <person name="Marques A.C."/>
            <person name="Graves T."/>
            <person name="Zhou S."/>
            <person name="Teague B."/>
            <person name="Potamousis K."/>
            <person name="Churas C."/>
            <person name="Place M."/>
            <person name="Herschleb J."/>
            <person name="Runnheim R."/>
            <person name="Forrest D."/>
            <person name="Amos-Landgraf J."/>
            <person name="Schwartz D.C."/>
            <person name="Cheng Z."/>
            <person name="Lindblad-Toh K."/>
            <person name="Eichler E.E."/>
            <person name="Ponting C.P."/>
        </authorList>
    </citation>
    <scope>NUCLEOTIDE SEQUENCE [LARGE SCALE GENOMIC DNA]</scope>
    <source>
        <strain>C57BL/6J</strain>
    </source>
</reference>
<reference key="5">
    <citation type="journal article" date="2002" name="Mol. Cell. Biol.">
        <title>Structurally normal corneas in aldehyde dehydrogenase 3a1-deficient mice.</title>
        <authorList>
            <person name="Nees D.W."/>
            <person name="Wawrousek E.F."/>
            <person name="Robison W.G. Jr."/>
            <person name="Piatigorsky J."/>
        </authorList>
    </citation>
    <scope>FUNCTION</scope>
    <source>
        <strain>CD-1</strain>
    </source>
</reference>
<reference key="6">
    <citation type="journal article" date="2010" name="Cell">
        <title>A tissue-specific atlas of mouse protein phosphorylation and expression.</title>
        <authorList>
            <person name="Huttlin E.L."/>
            <person name="Jedrychowski M.P."/>
            <person name="Elias J.E."/>
            <person name="Goswami T."/>
            <person name="Rad R."/>
            <person name="Beausoleil S.A."/>
            <person name="Villen J."/>
            <person name="Haas W."/>
            <person name="Sowa M.E."/>
            <person name="Gygi S.P."/>
        </authorList>
    </citation>
    <scope>IDENTIFICATION BY MASS SPECTROMETRY [LARGE SCALE ANALYSIS]</scope>
    <source>
        <tissue>Lung</tissue>
    </source>
</reference>
<reference key="7">
    <citation type="journal article" date="2015" name="Biochem. J.">
        <title>Mouse aldehyde dehydrogenase ALDH3B2 is localized to lipid droplets via two C-terminal tryptophan residues and lipid modification.</title>
        <authorList>
            <person name="Kitamura T."/>
            <person name="Takagi S."/>
            <person name="Naganuma T."/>
            <person name="Kihara A."/>
        </authorList>
    </citation>
    <scope>FUNCTION</scope>
    <scope>CATALYTIC ACTIVITY</scope>
    <scope>SUBCELLULAR LOCATION</scope>
</reference>
<feature type="initiator methionine" description="Removed" evidence="2">
    <location>
        <position position="1"/>
    </location>
</feature>
<feature type="chain" id="PRO_0000056471" description="Aldehyde dehydrogenase, dimeric NADP-preferring">
    <location>
        <begin position="2"/>
        <end position="453"/>
    </location>
</feature>
<feature type="active site" evidence="1">
    <location>
        <position position="210"/>
    </location>
</feature>
<feature type="active site" evidence="1">
    <location>
        <position position="244"/>
    </location>
</feature>
<feature type="binding site" evidence="1">
    <location>
        <begin position="188"/>
        <end position="193"/>
    </location>
    <ligand>
        <name>NAD(+)</name>
        <dbReference type="ChEBI" id="CHEBI:57540"/>
    </ligand>
</feature>
<feature type="modified residue" description="N-acetylserine" evidence="2">
    <location>
        <position position="2"/>
    </location>
</feature>
<feature type="modified residue" description="N6-acetyllysine" evidence="2">
    <location>
        <position position="178"/>
    </location>
</feature>
<feature type="modified residue" description="N6-acetyllysine" evidence="2">
    <location>
        <position position="194"/>
    </location>
</feature>
<feature type="sequence variant" description="In allele Ald3a1c." evidence="3">
    <original>I</original>
    <variation>N</variation>
    <location>
        <position position="154"/>
    </location>
</feature>
<feature type="sequence variant" description="In allele Ald3a1c." evidence="3">
    <original>H</original>
    <variation>R</variation>
    <location>
        <position position="305"/>
    </location>
</feature>
<feature type="sequence variant" description="In allele Ald3a1c." evidence="3">
    <original>I</original>
    <variation>V</variation>
    <location>
        <position position="352"/>
    </location>
</feature>
<feature type="sequence conflict" description="In Ref. 1; AAA20670." evidence="6" ref="1">
    <original>A</original>
    <variation>G</variation>
    <location>
        <position position="88"/>
    </location>
</feature>
<feature type="sequence conflict" description="In Ref. 3; AAD15964." evidence="6" ref="3">
    <original>A</original>
    <variation>R</variation>
    <location>
        <position position="88"/>
    </location>
</feature>
<accession>P47739</accession>
<accession>B1ATI7</accession>
<accession>Q9R203</accession>
<name>AL3A1_MOUSE</name>
<organism>
    <name type="scientific">Mus musculus</name>
    <name type="common">Mouse</name>
    <dbReference type="NCBI Taxonomy" id="10090"/>
    <lineage>
        <taxon>Eukaryota</taxon>
        <taxon>Metazoa</taxon>
        <taxon>Chordata</taxon>
        <taxon>Craniata</taxon>
        <taxon>Vertebrata</taxon>
        <taxon>Euteleostomi</taxon>
        <taxon>Mammalia</taxon>
        <taxon>Eutheria</taxon>
        <taxon>Euarchontoglires</taxon>
        <taxon>Glires</taxon>
        <taxon>Rodentia</taxon>
        <taxon>Myomorpha</taxon>
        <taxon>Muroidea</taxon>
        <taxon>Muridae</taxon>
        <taxon>Murinae</taxon>
        <taxon>Mus</taxon>
        <taxon>Mus</taxon>
    </lineage>
</organism>
<proteinExistence type="evidence at protein level"/>
<keyword id="KW-0007">Acetylation</keyword>
<keyword id="KW-0963">Cytoplasm</keyword>
<keyword id="KW-0443">Lipid metabolism</keyword>
<keyword id="KW-0520">NAD</keyword>
<keyword id="KW-0521">NADP</keyword>
<keyword id="KW-0560">Oxidoreductase</keyword>
<keyword id="KW-1185">Reference proteome</keyword>
<protein>
    <recommendedName>
        <fullName>Aldehyde dehydrogenase, dimeric NADP-preferring</fullName>
        <ecNumber evidence="5">1.2.1.5</ecNumber>
    </recommendedName>
    <alternativeName>
        <fullName>Aldehyde dehydrogenase 4</fullName>
    </alternativeName>
    <alternativeName>
        <fullName>Aldehyde dehydrogenase family 3 member A1</fullName>
    </alternativeName>
    <alternativeName>
        <fullName>Dioxin-inducible aldehyde dehydrogenase 3</fullName>
    </alternativeName>
</protein>
<gene>
    <name type="primary">Aldh3a1</name>
    <name type="synonym">Ahd-4</name>
    <name type="synonym">Ahd4</name>
    <name type="synonym">Aldh3</name>
    <name type="synonym">Aldh4</name>
</gene>
<sequence length="453" mass="50481">MSNISSIVNRARDAFNSGKTRPLQFRVEQLEALQRMINENLKGISKALASNLRKNEWTSYYEEVAHVLDEIDFTIKGLSDWAEDEPVAKTRQTQEDDLYIHSEPLGVVLVIGAWNYPFNLTIQPMVGAIAAGNAVVLKPSEVSDHMADLLSTLIPQYMDKDLYPVIKGGVPETTELLKEKFDHIMYTGSTAVGKIVMAAAAKHLTPVTLELGGKSPCYVDKDCDLDVACRRIAWGKFMNSGQTCVAPDYILCDPSIQNEIVEKLKKSLKDFYGEDAKQSHDYGRIINDRHFQRVINLIDSKKVAHGGTWDQPSRYIAPTILVDVDPQSPVMQEEIFGPVMPIVCVRSLDEAIKFINQREKPLALYVFSNNDKVIKKMIAETSSGGVTANDVIVHITVPTLPFGGVGNSGMGAYHGKKSFETFSHRRSCLVRSLRNEEANKARYPPSPAKMPRH</sequence>
<comment type="function">
    <text evidence="2 3 4 5 6">ALDHs play a major role in the detoxification of alcohol-derived acetaldehyde (Probable). They are involved in the metabolism of corticosteroids, biogenic amines, neurotransmitters, and lipid peroxidation (Probable). Oxidizes medium and long chain aldehydes into non-toxic fatty acids (PubMed:25286108). Preferentially oxidizes aromatic aldehyde substrates (PubMed:11784860). Comprises about 50 percent of corneal epithelial soluble proteins (PubMed:11784860). May play a role in preventing corneal damage caused by ultraviolet light (PubMed:10376761).</text>
</comment>
<comment type="catalytic activity">
    <reaction evidence="5">
        <text>an aldehyde + NAD(+) + H2O = a carboxylate + NADH + 2 H(+)</text>
        <dbReference type="Rhea" id="RHEA:16185"/>
        <dbReference type="ChEBI" id="CHEBI:15377"/>
        <dbReference type="ChEBI" id="CHEBI:15378"/>
        <dbReference type="ChEBI" id="CHEBI:17478"/>
        <dbReference type="ChEBI" id="CHEBI:29067"/>
        <dbReference type="ChEBI" id="CHEBI:57540"/>
        <dbReference type="ChEBI" id="CHEBI:57945"/>
        <dbReference type="EC" id="1.2.1.5"/>
    </reaction>
</comment>
<comment type="catalytic activity">
    <reaction evidence="5">
        <text>octanal + NAD(+) + H2O = octanoate + NADH + 2 H(+)</text>
        <dbReference type="Rhea" id="RHEA:44100"/>
        <dbReference type="ChEBI" id="CHEBI:15377"/>
        <dbReference type="ChEBI" id="CHEBI:15378"/>
        <dbReference type="ChEBI" id="CHEBI:17935"/>
        <dbReference type="ChEBI" id="CHEBI:25646"/>
        <dbReference type="ChEBI" id="CHEBI:57540"/>
        <dbReference type="ChEBI" id="CHEBI:57945"/>
    </reaction>
</comment>
<comment type="subunit">
    <text evidence="2">Homodimer.</text>
</comment>
<comment type="subcellular location">
    <subcellularLocation>
        <location evidence="5">Cytoplasm</location>
    </subcellularLocation>
</comment>
<comment type="tissue specificity">
    <text evidence="3">Constitutively expressed in cornea, stomach, skin, bladder and lungs. Lowest expression levels in lungs and bladder.</text>
</comment>
<comment type="polymorphism">
    <text evidence="3">There are two alleles, Ald3a1a and Ald3a1c. Ald3a1c codes for a low activity enzyme and is associated with extensive corneal clouding after exposure to ultraviolet light. Ald3a1a encodes the high activity enzyme.</text>
</comment>
<comment type="similarity">
    <text evidence="6">Belongs to the aldehyde dehydrogenase family.</text>
</comment>